<sequence>MKITILSGGTGTPKLIQGFKEILPNEDISVIVNTGEDTYIGDIYLSPDIDTVLYTFSNLINDETWYGLKGDTFFCHEQLKNFGFDEVLRIGDKDRALKMHKTSLLKKGVPMSEIVDIERKSLSINSKIYPMSDEKIESKVLIEENNEKILLKFHDFWVSRRGNAKVLDIFYENSNYAKAADGVLKAIEESDFVIIGPSNPITSIGPILSISEIKDALKEKLVFAVSPIVGENPVSGPAGTLMHAKGYPVNAVGVYEYYKDIVDVLVLDNSDINKKKEMNCEVLYANTIMKTIDDKITLARNILDYYKSR</sequence>
<gene>
    <name evidence="1" type="primary">cofD</name>
    <name type="ordered locus">MMP0404</name>
</gene>
<dbReference type="EC" id="2.7.8.28" evidence="1"/>
<dbReference type="EMBL" id="BX950229">
    <property type="protein sequence ID" value="CAF29960.1"/>
    <property type="molecule type" value="Genomic_DNA"/>
</dbReference>
<dbReference type="RefSeq" id="WP_011170348.1">
    <property type="nucleotide sequence ID" value="NC_005791.1"/>
</dbReference>
<dbReference type="SMR" id="Q6M067"/>
<dbReference type="STRING" id="267377.MMP0404"/>
<dbReference type="EnsemblBacteria" id="CAF29960">
    <property type="protein sequence ID" value="CAF29960"/>
    <property type="gene ID" value="MMP0404"/>
</dbReference>
<dbReference type="GeneID" id="2761595"/>
<dbReference type="KEGG" id="mmp:MMP0404"/>
<dbReference type="PATRIC" id="fig|267377.15.peg.408"/>
<dbReference type="eggNOG" id="arCOG04395">
    <property type="taxonomic scope" value="Archaea"/>
</dbReference>
<dbReference type="HOGENOM" id="CLU_055795_1_0_2"/>
<dbReference type="OrthoDB" id="59563at2157"/>
<dbReference type="UniPathway" id="UPA00071"/>
<dbReference type="Proteomes" id="UP000000590">
    <property type="component" value="Chromosome"/>
</dbReference>
<dbReference type="GO" id="GO:0043743">
    <property type="term" value="F:LPPG:FO 2-phospho-L-lactate transferase activity"/>
    <property type="evidence" value="ECO:0007669"/>
    <property type="project" value="UniProtKB-EC"/>
</dbReference>
<dbReference type="GO" id="GO:0000287">
    <property type="term" value="F:magnesium ion binding"/>
    <property type="evidence" value="ECO:0007669"/>
    <property type="project" value="InterPro"/>
</dbReference>
<dbReference type="GO" id="GO:0052645">
    <property type="term" value="P:F420-0 metabolic process"/>
    <property type="evidence" value="ECO:0007669"/>
    <property type="project" value="UniProtKB-UniRule"/>
</dbReference>
<dbReference type="CDD" id="cd07186">
    <property type="entry name" value="CofD_like"/>
    <property type="match status" value="1"/>
</dbReference>
<dbReference type="Gene3D" id="1.10.8.240">
    <property type="entry name" value="CofD-like domain"/>
    <property type="match status" value="1"/>
</dbReference>
<dbReference type="Gene3D" id="3.40.50.10680">
    <property type="entry name" value="CofD-like domains"/>
    <property type="match status" value="1"/>
</dbReference>
<dbReference type="HAMAP" id="MF_01257">
    <property type="entry name" value="CofD"/>
    <property type="match status" value="1"/>
</dbReference>
<dbReference type="InterPro" id="IPR002882">
    <property type="entry name" value="CofD"/>
</dbReference>
<dbReference type="InterPro" id="IPR038136">
    <property type="entry name" value="CofD-like_dom_sf"/>
</dbReference>
<dbReference type="InterPro" id="IPR010115">
    <property type="entry name" value="FbiA/CofD"/>
</dbReference>
<dbReference type="NCBIfam" id="TIGR01819">
    <property type="entry name" value="F420_cofD"/>
    <property type="match status" value="1"/>
</dbReference>
<dbReference type="PANTHER" id="PTHR43007">
    <property type="entry name" value="2-PHOSPHO-L-LACTATE TRANSFERASE"/>
    <property type="match status" value="1"/>
</dbReference>
<dbReference type="PANTHER" id="PTHR43007:SF1">
    <property type="entry name" value="2-PHOSPHO-L-LACTATE TRANSFERASE"/>
    <property type="match status" value="1"/>
</dbReference>
<dbReference type="Pfam" id="PF01933">
    <property type="entry name" value="CofD"/>
    <property type="match status" value="1"/>
</dbReference>
<dbReference type="SUPFAM" id="SSF142338">
    <property type="entry name" value="CofD-like"/>
    <property type="match status" value="1"/>
</dbReference>
<reference key="1">
    <citation type="journal article" date="2004" name="J. Bacteriol.">
        <title>Complete genome sequence of the genetically tractable hydrogenotrophic methanogen Methanococcus maripaludis.</title>
        <authorList>
            <person name="Hendrickson E.L."/>
            <person name="Kaul R."/>
            <person name="Zhou Y."/>
            <person name="Bovee D."/>
            <person name="Chapman P."/>
            <person name="Chung J."/>
            <person name="Conway de Macario E."/>
            <person name="Dodsworth J.A."/>
            <person name="Gillett W."/>
            <person name="Graham D.E."/>
            <person name="Hackett M."/>
            <person name="Haydock A.K."/>
            <person name="Kang A."/>
            <person name="Land M.L."/>
            <person name="Levy R."/>
            <person name="Lie T.J."/>
            <person name="Major T.A."/>
            <person name="Moore B.C."/>
            <person name="Porat I."/>
            <person name="Palmeiri A."/>
            <person name="Rouse G."/>
            <person name="Saenphimmachak C."/>
            <person name="Soell D."/>
            <person name="Van Dien S."/>
            <person name="Wang T."/>
            <person name="Whitman W.B."/>
            <person name="Xia Q."/>
            <person name="Zhang Y."/>
            <person name="Larimer F.W."/>
            <person name="Olson M.V."/>
            <person name="Leigh J.A."/>
        </authorList>
    </citation>
    <scope>NUCLEOTIDE SEQUENCE [LARGE SCALE GENOMIC DNA]</scope>
    <source>
        <strain>DSM 14266 / JCM 13030 / NBRC 101832 / S2 / LL</strain>
    </source>
</reference>
<accession>Q6M067</accession>
<feature type="chain" id="PRO_0000145775" description="2-phospho-L-lactate transferase">
    <location>
        <begin position="1"/>
        <end position="309"/>
    </location>
</feature>
<feature type="binding site" evidence="1">
    <location>
        <position position="50"/>
    </location>
    <ligand>
        <name>7,8-didemethyl-8-hydroxy-5-deazariboflavin</name>
        <dbReference type="ChEBI" id="CHEBI:59904"/>
    </ligand>
</feature>
<feature type="binding site" evidence="1">
    <location>
        <position position="89"/>
    </location>
    <ligand>
        <name>7,8-didemethyl-8-hydroxy-5-deazariboflavin</name>
        <dbReference type="ChEBI" id="CHEBI:59904"/>
    </ligand>
</feature>
<name>COFD_METMP</name>
<comment type="function">
    <text evidence="1">Catalyzes the transfer of the 2-phospholactate moiety from (2S)-lactyl-2-diphospho-5'-guanosine to 7,8-didemethyl-8-hydroxy-5-deazariboflavin (FO) with the formation of oxidized coenzyme F420-0 and GMP.</text>
</comment>
<comment type="catalytic activity">
    <reaction evidence="1">
        <text>(2S)-lactyl-2-diphospho-5'-guanosine + 7,8-didemethyl-8-hydroxy-5-deazariboflavin = oxidized coenzyme F420-0 + GMP + H(+)</text>
        <dbReference type="Rhea" id="RHEA:63444"/>
        <dbReference type="ChEBI" id="CHEBI:15378"/>
        <dbReference type="ChEBI" id="CHEBI:58115"/>
        <dbReference type="ChEBI" id="CHEBI:59435"/>
        <dbReference type="ChEBI" id="CHEBI:59904"/>
        <dbReference type="ChEBI" id="CHEBI:59907"/>
        <dbReference type="EC" id="2.7.8.28"/>
    </reaction>
</comment>
<comment type="cofactor">
    <cofactor evidence="1">
        <name>Mg(2+)</name>
        <dbReference type="ChEBI" id="CHEBI:18420"/>
    </cofactor>
</comment>
<comment type="pathway">
    <text evidence="1">Cofactor biosynthesis; coenzyme F420 biosynthesis.</text>
</comment>
<comment type="subunit">
    <text evidence="1">Homodimer.</text>
</comment>
<comment type="similarity">
    <text evidence="1">Belongs to the CofD family.</text>
</comment>
<organism>
    <name type="scientific">Methanococcus maripaludis (strain DSM 14266 / JCM 13030 / NBRC 101832 / S2 / LL)</name>
    <dbReference type="NCBI Taxonomy" id="267377"/>
    <lineage>
        <taxon>Archaea</taxon>
        <taxon>Methanobacteriati</taxon>
        <taxon>Methanobacteriota</taxon>
        <taxon>Methanomada group</taxon>
        <taxon>Methanococci</taxon>
        <taxon>Methanococcales</taxon>
        <taxon>Methanococcaceae</taxon>
        <taxon>Methanococcus</taxon>
    </lineage>
</organism>
<protein>
    <recommendedName>
        <fullName evidence="1">2-phospho-L-lactate transferase</fullName>
        <ecNumber evidence="1">2.7.8.28</ecNumber>
    </recommendedName>
</protein>
<proteinExistence type="inferred from homology"/>
<evidence type="ECO:0000255" key="1">
    <source>
        <dbReference type="HAMAP-Rule" id="MF_01257"/>
    </source>
</evidence>
<keyword id="KW-0460">Magnesium</keyword>
<keyword id="KW-1185">Reference proteome</keyword>
<keyword id="KW-0808">Transferase</keyword>